<proteinExistence type="evidence at protein level"/>
<keyword id="KW-0002">3D-structure</keyword>
<keyword id="KW-0165">Cleavage on pair of basic residues</keyword>
<keyword id="KW-0903">Direct protein sequencing</keyword>
<keyword id="KW-0472">Membrane</keyword>
<keyword id="KW-0496">Mitochondrion</keyword>
<keyword id="KW-0999">Mitochondrion inner membrane</keyword>
<keyword id="KW-0560">Oxidoreductase</keyword>
<keyword id="KW-1185">Reference proteome</keyword>
<keyword id="KW-0812">Transmembrane</keyword>
<keyword id="KW-1133">Transmembrane helix</keyword>
<comment type="function">
    <text evidence="9">Component of the cytochrome c oxidase, the last enzyme in the mitochondrial electron transport chain which drives oxidative phosphorylation. The respiratory chain contains 3 multisubunit complexes succinate dehydrogenase (complex II, CII), ubiquinol-cytochrome c oxidoreductase (cytochrome b-c1 complex, complex III, CIII) and cytochrome c oxidase (complex IV, CIV), that cooperate to transfer electrons derived from NADH and succinate to molecular oxygen, creating an electrochemical gradient over the inner membrane that drives transmembrane transport and the ATP synthase. Cytochrome c oxidase is the component of the respiratory chain that catalyzes the reduction of oxygen to water. Electrons originating from reduced cytochrome c in the intermembrane space (IMS) are transferred via the dinuclear copper A center (CU(A)) of COX2 and heme A of COX1 to the active site in COX1, a binuclear center (BNC) formed by heme A3 and copper B (CU(B)). The BNC reduces molecular oxygen to 2 water molecules using 4 electrons from cytochrome c in the IMS and 4 protons from the mitochondrial matrix.</text>
</comment>
<comment type="pathway">
    <text>Energy metabolism; oxidative phosphorylation.</text>
</comment>
<comment type="subunit">
    <text evidence="1 2 5 6 7">Component of the cytochrome c oxidase (complex IV, CIV), a multisubunit enzyme composed of 12 subunits. The complex is composed of a catalytic core of 3 subunits COX1, COX2 and COX3, encoded in the mitochondrial DNA, and 9 supernumerary subunits COX4, COX5A (or COX5B), COX6, COX7, COX8, COX9, COX12, COX13 and COX26, which are encoded in the nuclear genome (PubMed:30598554, PubMed:30598556, PubMed:7851399). The complex exists as a monomer or a dimer and forms supercomplexes (SCs) in the inner mitochondrial membrane with a dimer of ubiquinol-cytochrome c oxidoreductase (cytochrome b-c1 complex, complex III, CIII), resulting in 2 different assemblies (supercomplexes III(2)IV and III(2)IV(2)) (PubMed:10764779, PubMed:10775262, PubMed:30598554, PubMed:30598556).</text>
</comment>
<comment type="subcellular location">
    <subcellularLocation>
        <location evidence="5">Mitochondrion inner membrane</location>
        <topology evidence="5">Single-pass membrane protein</topology>
    </subcellularLocation>
</comment>
<comment type="miscellaneous">
    <text evidence="3">Present with 35500 molecules/cell in log phase SD medium.</text>
</comment>
<comment type="similarity">
    <text evidence="8">Belongs to the fungal cytochrome c oxidase subunit 7a family.</text>
</comment>
<feature type="initiator methionine" description="Removed" evidence="4 7">
    <location>
        <position position="1"/>
    </location>
</feature>
<feature type="chain" id="PRO_0000006076" description="Cytochrome c oxidase subunit 9, mitochondrial">
    <location>
        <begin position="2"/>
        <end position="56"/>
    </location>
</feature>
<feature type="propeptide" id="PRO_0000006077" description="Removed in mature form" evidence="4">
    <location>
        <begin position="57"/>
        <end position="59"/>
    </location>
</feature>
<feature type="topological domain" description="Mitochondrial matrix" evidence="5">
    <location>
        <begin position="2"/>
        <end position="8"/>
    </location>
</feature>
<feature type="transmembrane region" description="Helical" evidence="5">
    <location>
        <begin position="9"/>
        <end position="44"/>
    </location>
</feature>
<feature type="topological domain" description="Mitochondrial intermembrane" evidence="5">
    <location>
        <begin position="45"/>
        <end position="56"/>
    </location>
</feature>
<feature type="sequence conflict" description="In Ref. 8; AA sequence." evidence="8" ref="8">
    <original>T</original>
    <variation>A</variation>
    <location>
        <position position="2"/>
    </location>
</feature>
<feature type="helix" evidence="10">
    <location>
        <begin position="9"/>
        <end position="34"/>
    </location>
</feature>
<feature type="helix" evidence="10">
    <location>
        <begin position="37"/>
        <end position="54"/>
    </location>
</feature>
<gene>
    <name type="primary">COX9</name>
    <name type="ordered locus">YDL067C</name>
    <name type="ORF">D2520</name>
</gene>
<sequence>MTIAPITGTIKRRVIMDIVLGFSLGGVMASYWWWGFHMDKINKREKFYAELAERKKQEN</sequence>
<organism>
    <name type="scientific">Saccharomyces cerevisiae (strain ATCC 204508 / S288c)</name>
    <name type="common">Baker's yeast</name>
    <dbReference type="NCBI Taxonomy" id="559292"/>
    <lineage>
        <taxon>Eukaryota</taxon>
        <taxon>Fungi</taxon>
        <taxon>Dikarya</taxon>
        <taxon>Ascomycota</taxon>
        <taxon>Saccharomycotina</taxon>
        <taxon>Saccharomycetes</taxon>
        <taxon>Saccharomycetales</taxon>
        <taxon>Saccharomycetaceae</taxon>
        <taxon>Saccharomyces</taxon>
    </lineage>
</organism>
<evidence type="ECO:0000269" key="1">
    <source>
    </source>
</evidence>
<evidence type="ECO:0000269" key="2">
    <source>
    </source>
</evidence>
<evidence type="ECO:0000269" key="3">
    <source>
    </source>
</evidence>
<evidence type="ECO:0000269" key="4">
    <source>
    </source>
</evidence>
<evidence type="ECO:0000269" key="5">
    <source>
    </source>
</evidence>
<evidence type="ECO:0000269" key="6">
    <source>
    </source>
</evidence>
<evidence type="ECO:0000269" key="7">
    <source>
    </source>
</evidence>
<evidence type="ECO:0000305" key="8"/>
<evidence type="ECO:0000305" key="9">
    <source>
    </source>
</evidence>
<evidence type="ECO:0007829" key="10">
    <source>
        <dbReference type="PDB" id="9ETZ"/>
    </source>
</evidence>
<accession>P07255</accession>
<accession>D6VRT0</accession>
<protein>
    <recommendedName>
        <fullName>Cytochrome c oxidase subunit 9, mitochondrial</fullName>
    </recommendedName>
    <alternativeName>
        <fullName>Cytochrome c oxidase polypeptide VIIA</fullName>
    </alternativeName>
</protein>
<name>COX9_YEAST</name>
<reference key="1">
    <citation type="journal article" date="1986" name="J. Biol. Chem.">
        <title>Characterization of COX9, the nuclear gene encoding the yeast mitochondrial protein cytochrome c oxidase subunit VIIa. Subunit VIIa lacks a leader peptide and is an essential component of the holoenzyme.</title>
        <authorList>
            <person name="Wright R.M."/>
            <person name="Dircks L.K."/>
            <person name="Poyton R.O."/>
        </authorList>
    </citation>
    <scope>NUCLEOTIDE SEQUENCE [GENOMIC DNA]</scope>
</reference>
<reference key="2">
    <citation type="journal article" date="1990" name="J. Biol. Chem.">
        <title>Mitochondrial import of cytochrome c oxidase subunit VIIa in Saccharomyces cerevisiae. Identification of sequences required for mitochondrial localization in vivo.</title>
        <authorList>
            <person name="Duhl D.M."/>
            <person name="Powell T."/>
            <person name="Poyton R.O."/>
        </authorList>
    </citation>
    <scope>NUCLEOTIDE SEQUENCE [GENOMIC DNA]</scope>
</reference>
<reference key="3">
    <citation type="journal article" date="1989" name="Mol. Gen. Genet.">
        <title>Chromosomal localization and expression of CBS1, a translational activator of cytochrome b in yeast.</title>
        <authorList>
            <person name="Forsbach V."/>
            <person name="Pillar T."/>
            <person name="Gottenoef T."/>
            <person name="Roedel G."/>
        </authorList>
    </citation>
    <scope>NUCLEOTIDE SEQUENCE [GENOMIC DNA]</scope>
</reference>
<reference key="4">
    <citation type="journal article" date="1997" name="Nature">
        <title>The nucleotide sequence of Saccharomyces cerevisiae chromosome IV.</title>
        <authorList>
            <person name="Jacq C."/>
            <person name="Alt-Moerbe J."/>
            <person name="Andre B."/>
            <person name="Arnold W."/>
            <person name="Bahr A."/>
            <person name="Ballesta J.P.G."/>
            <person name="Bargues M."/>
            <person name="Baron L."/>
            <person name="Becker A."/>
            <person name="Biteau N."/>
            <person name="Bloecker H."/>
            <person name="Blugeon C."/>
            <person name="Boskovic J."/>
            <person name="Brandt P."/>
            <person name="Brueckner M."/>
            <person name="Buitrago M.J."/>
            <person name="Coster F."/>
            <person name="Delaveau T."/>
            <person name="del Rey F."/>
            <person name="Dujon B."/>
            <person name="Eide L.G."/>
            <person name="Garcia-Cantalejo J.M."/>
            <person name="Goffeau A."/>
            <person name="Gomez-Peris A."/>
            <person name="Granotier C."/>
            <person name="Hanemann V."/>
            <person name="Hankeln T."/>
            <person name="Hoheisel J.D."/>
            <person name="Jaeger W."/>
            <person name="Jimenez A."/>
            <person name="Jonniaux J.-L."/>
            <person name="Kraemer C."/>
            <person name="Kuester H."/>
            <person name="Laamanen P."/>
            <person name="Legros Y."/>
            <person name="Louis E.J."/>
            <person name="Moeller-Rieker S."/>
            <person name="Monnet A."/>
            <person name="Moro M."/>
            <person name="Mueller-Auer S."/>
            <person name="Nussbaumer B."/>
            <person name="Paricio N."/>
            <person name="Paulin L."/>
            <person name="Perea J."/>
            <person name="Perez-Alonso M."/>
            <person name="Perez-Ortin J.E."/>
            <person name="Pohl T.M."/>
            <person name="Prydz H."/>
            <person name="Purnelle B."/>
            <person name="Rasmussen S.W."/>
            <person name="Remacha M.A."/>
            <person name="Revuelta J.L."/>
            <person name="Rieger M."/>
            <person name="Salom D."/>
            <person name="Saluz H.P."/>
            <person name="Saiz J.E."/>
            <person name="Saren A.-M."/>
            <person name="Schaefer M."/>
            <person name="Scharfe M."/>
            <person name="Schmidt E.R."/>
            <person name="Schneider C."/>
            <person name="Scholler P."/>
            <person name="Schwarz S."/>
            <person name="Soler-Mira A."/>
            <person name="Urrestarazu L.A."/>
            <person name="Verhasselt P."/>
            <person name="Vissers S."/>
            <person name="Voet M."/>
            <person name="Volckaert G."/>
            <person name="Wagner G."/>
            <person name="Wambutt R."/>
            <person name="Wedler E."/>
            <person name="Wedler H."/>
            <person name="Woelfl S."/>
            <person name="Harris D.E."/>
            <person name="Bowman S."/>
            <person name="Brown D."/>
            <person name="Churcher C.M."/>
            <person name="Connor R."/>
            <person name="Dedman K."/>
            <person name="Gentles S."/>
            <person name="Hamlin N."/>
            <person name="Hunt S."/>
            <person name="Jones L."/>
            <person name="McDonald S."/>
            <person name="Murphy L.D."/>
            <person name="Niblett D."/>
            <person name="Odell C."/>
            <person name="Oliver K."/>
            <person name="Rajandream M.A."/>
            <person name="Richards C."/>
            <person name="Shore L."/>
            <person name="Walsh S.V."/>
            <person name="Barrell B.G."/>
            <person name="Dietrich F.S."/>
            <person name="Mulligan J.T."/>
            <person name="Allen E."/>
            <person name="Araujo R."/>
            <person name="Aviles E."/>
            <person name="Berno A."/>
            <person name="Carpenter J."/>
            <person name="Chen E."/>
            <person name="Cherry J.M."/>
            <person name="Chung E."/>
            <person name="Duncan M."/>
            <person name="Hunicke-Smith S."/>
            <person name="Hyman R.W."/>
            <person name="Komp C."/>
            <person name="Lashkari D."/>
            <person name="Lew H."/>
            <person name="Lin D."/>
            <person name="Mosedale D."/>
            <person name="Nakahara K."/>
            <person name="Namath A."/>
            <person name="Oefner P."/>
            <person name="Oh C."/>
            <person name="Petel F.X."/>
            <person name="Roberts D."/>
            <person name="Schramm S."/>
            <person name="Schroeder M."/>
            <person name="Shogren T."/>
            <person name="Shroff N."/>
            <person name="Winant A."/>
            <person name="Yelton M.A."/>
            <person name="Botstein D."/>
            <person name="Davis R.W."/>
            <person name="Johnston M."/>
            <person name="Andrews S."/>
            <person name="Brinkman R."/>
            <person name="Cooper J."/>
            <person name="Ding H."/>
            <person name="Du Z."/>
            <person name="Favello A."/>
            <person name="Fulton L."/>
            <person name="Gattung S."/>
            <person name="Greco T."/>
            <person name="Hallsworth K."/>
            <person name="Hawkins J."/>
            <person name="Hillier L.W."/>
            <person name="Jier M."/>
            <person name="Johnson D."/>
            <person name="Johnston L."/>
            <person name="Kirsten J."/>
            <person name="Kucaba T."/>
            <person name="Langston Y."/>
            <person name="Latreille P."/>
            <person name="Le T."/>
            <person name="Mardis E."/>
            <person name="Menezes S."/>
            <person name="Miller N."/>
            <person name="Nhan M."/>
            <person name="Pauley A."/>
            <person name="Peluso D."/>
            <person name="Rifkin L."/>
            <person name="Riles L."/>
            <person name="Taich A."/>
            <person name="Trevaskis E."/>
            <person name="Vignati D."/>
            <person name="Wilcox L."/>
            <person name="Wohldman P."/>
            <person name="Vaudin M."/>
            <person name="Wilson R."/>
            <person name="Waterston R."/>
            <person name="Albermann K."/>
            <person name="Hani J."/>
            <person name="Heumann K."/>
            <person name="Kleine K."/>
            <person name="Mewes H.-W."/>
            <person name="Zollner A."/>
            <person name="Zaccaria P."/>
        </authorList>
    </citation>
    <scope>NUCLEOTIDE SEQUENCE [LARGE SCALE GENOMIC DNA]</scope>
    <source>
        <strain>ATCC 204508 / S288c</strain>
    </source>
</reference>
<reference key="5">
    <citation type="journal article" date="2014" name="G3 (Bethesda)">
        <title>The reference genome sequence of Saccharomyces cerevisiae: Then and now.</title>
        <authorList>
            <person name="Engel S.R."/>
            <person name="Dietrich F.S."/>
            <person name="Fisk D.G."/>
            <person name="Binkley G."/>
            <person name="Balakrishnan R."/>
            <person name="Costanzo M.C."/>
            <person name="Dwight S.S."/>
            <person name="Hitz B.C."/>
            <person name="Karra K."/>
            <person name="Nash R.S."/>
            <person name="Weng S."/>
            <person name="Wong E.D."/>
            <person name="Lloyd P."/>
            <person name="Skrzypek M.S."/>
            <person name="Miyasato S.R."/>
            <person name="Simison M."/>
            <person name="Cherry J.M."/>
        </authorList>
    </citation>
    <scope>GENOME REANNOTATION</scope>
    <source>
        <strain>ATCC 204508 / S288c</strain>
    </source>
</reference>
<reference key="6">
    <citation type="journal article" date="2007" name="Genome Res.">
        <title>Approaching a complete repository of sequence-verified protein-encoding clones for Saccharomyces cerevisiae.</title>
        <authorList>
            <person name="Hu Y."/>
            <person name="Rolfs A."/>
            <person name="Bhullar B."/>
            <person name="Murthy T.V.S."/>
            <person name="Zhu C."/>
            <person name="Berger M.F."/>
            <person name="Camargo A.A."/>
            <person name="Kelley F."/>
            <person name="McCarron S."/>
            <person name="Jepson D."/>
            <person name="Richardson A."/>
            <person name="Raphael J."/>
            <person name="Moreira D."/>
            <person name="Taycher E."/>
            <person name="Zuo D."/>
            <person name="Mohr S."/>
            <person name="Kane M.F."/>
            <person name="Williamson J."/>
            <person name="Simpson A.J.G."/>
            <person name="Bulyk M.L."/>
            <person name="Harlow E."/>
            <person name="Marsischky G."/>
            <person name="Kolodner R.D."/>
            <person name="LaBaer J."/>
        </authorList>
    </citation>
    <scope>NUCLEOTIDE SEQUENCE [GENOMIC DNA]</scope>
    <source>
        <strain>ATCC 204508 / S288c</strain>
    </source>
</reference>
<reference key="7">
    <citation type="journal article" date="1986" name="J. Biol. Chem.">
        <title>The nuclear-coded subunits of yeast cytochrome c oxidase. The amino acid sequences of subunits VII and VIIa, structural similarities between the three smallest polypeptides of the holoenzyme, and implications for biogenesis.</title>
        <authorList>
            <person name="Power S.D."/>
            <person name="Lochrie M.A."/>
            <person name="Poyton R.O."/>
        </authorList>
    </citation>
    <scope>PROTEIN SEQUENCE OF 2-56</scope>
</reference>
<reference key="8">
    <citation type="journal article" date="1995" name="Eur. J. Biochem.">
        <title>Kinetic properties and ligand binding of the eleven-subunit cytochrome-c oxidase from Saccharomyces cerevisiae isolated with a novel large-scale purification method.</title>
        <authorList>
            <person name="Geier B.M."/>
            <person name="Schagger H."/>
            <person name="Ortwein C."/>
            <person name="Link T.A."/>
            <person name="Hagen W.R."/>
            <person name="Brandt U."/>
            <person name="Von Jagow G."/>
        </authorList>
    </citation>
    <scope>PROTEIN SEQUENCE OF 2-4</scope>
    <scope>COMPOSITION OF THE CYTOCHROME C OXIDASE COMPLEX</scope>
</reference>
<reference key="9">
    <citation type="journal article" date="2000" name="EMBO J.">
        <title>Supercomplexes in the respiratory chains of yeast and mammalian mitochondria.</title>
        <authorList>
            <person name="Schaegger H."/>
            <person name="Pfeiffer K."/>
        </authorList>
    </citation>
    <scope>FORMATION OF CYTOCHROME BC1-CYTOCHROME C OXIDASE SUPERCOMPLEX</scope>
</reference>
<reference key="10">
    <citation type="journal article" date="2000" name="J. Biol. Chem.">
        <title>The cytochrome bc1 and cytochrome c oxidase complexes associate to form a single supracomplex in yeast mitochondria.</title>
        <authorList>
            <person name="Cruciat C.M."/>
            <person name="Brunner S."/>
            <person name="Baumann F."/>
            <person name="Neupert W."/>
            <person name="Stuart R.A."/>
        </authorList>
    </citation>
    <scope>FORMATION OF CYTOCHROME BC1-CYTOCHROME C OXIDASE SUPERCOMPLEX</scope>
</reference>
<reference key="11">
    <citation type="journal article" date="2003" name="Nature">
        <title>Global analysis of protein expression in yeast.</title>
        <authorList>
            <person name="Ghaemmaghami S."/>
            <person name="Huh W.-K."/>
            <person name="Bower K."/>
            <person name="Howson R.W."/>
            <person name="Belle A."/>
            <person name="Dephoure N."/>
            <person name="O'Shea E.K."/>
            <person name="Weissman J.S."/>
        </authorList>
    </citation>
    <scope>LEVEL OF PROTEIN EXPRESSION [LARGE SCALE ANALYSIS]</scope>
</reference>
<reference key="12">
    <citation type="journal article" date="2012" name="Proc. Natl. Acad. Sci. U.S.A.">
        <title>N-terminal acetylome analyses and functional insights of the N-terminal acetyltransferase NatB.</title>
        <authorList>
            <person name="Van Damme P."/>
            <person name="Lasa M."/>
            <person name="Polevoda B."/>
            <person name="Gazquez C."/>
            <person name="Elosegui-Artola A."/>
            <person name="Kim D.S."/>
            <person name="De Juan-Pardo E."/>
            <person name="Demeyer K."/>
            <person name="Hole K."/>
            <person name="Larrea E."/>
            <person name="Timmerman E."/>
            <person name="Prieto J."/>
            <person name="Arnesen T."/>
            <person name="Sherman F."/>
            <person name="Gevaert K."/>
            <person name="Aldabe R."/>
        </authorList>
    </citation>
    <scope>IDENTIFICATION BY MASS SPECTROMETRY [LARGE SCALE ANALYSIS]</scope>
</reference>
<reference key="13">
    <citation type="journal article" date="2019" name="Nat. Struct. Mol. Biol.">
        <title>Cryo-EM structure of the yeast respiratory supercomplex.</title>
        <authorList>
            <person name="Rathore S."/>
            <person name="Berndtsson J."/>
            <person name="Marin-Buera L."/>
            <person name="Conrad J."/>
            <person name="Carroni M."/>
            <person name="Brzezinski P."/>
            <person name="Ott M."/>
        </authorList>
    </citation>
    <scope>STRUCTURE BY ELECTRON MICROSCOPY (3.23 ANGSTROMS)</scope>
</reference>
<reference key="14">
    <citation type="journal article" date="2019" name="Nat. Struct. Mol. Biol.">
        <title>Structure of yeast cytochrome c oxidase in a supercomplex with cytochrome bc1.</title>
        <authorList>
            <person name="Hartley A.M."/>
            <person name="Lukoyanova N."/>
            <person name="Zhang Y."/>
            <person name="Cabrera-Orefice A."/>
            <person name="Arnold S."/>
            <person name="Meunier B."/>
            <person name="Pinotsis N."/>
            <person name="Marechal A."/>
        </authorList>
    </citation>
    <scope>STRUCTURE BY ELECTRON MICROSCOPY (3.35 ANGSTROMS)</scope>
    <scope>FUNCTION</scope>
</reference>
<dbReference type="EMBL" id="J02633">
    <property type="protein sequence ID" value="AAB03896.1"/>
    <property type="molecule type" value="Genomic_DNA"/>
</dbReference>
<dbReference type="EMBL" id="M35260">
    <property type="protein sequence ID" value="AAA34523.1"/>
    <property type="molecule type" value="Genomic_DNA"/>
</dbReference>
<dbReference type="EMBL" id="X16120">
    <property type="protein sequence ID" value="CAA34250.1"/>
    <property type="molecule type" value="Genomic_DNA"/>
</dbReference>
<dbReference type="EMBL" id="Z74115">
    <property type="protein sequence ID" value="CAA98632.1"/>
    <property type="molecule type" value="Genomic_DNA"/>
</dbReference>
<dbReference type="EMBL" id="AY558525">
    <property type="protein sequence ID" value="AAS56851.1"/>
    <property type="molecule type" value="Genomic_DNA"/>
</dbReference>
<dbReference type="EMBL" id="BK006938">
    <property type="protein sequence ID" value="DAA11790.1"/>
    <property type="molecule type" value="Genomic_DNA"/>
</dbReference>
<dbReference type="PIR" id="JQ0325">
    <property type="entry name" value="OBBY7A"/>
</dbReference>
<dbReference type="RefSeq" id="NP_010216.1">
    <property type="nucleotide sequence ID" value="NM_001180126.1"/>
</dbReference>
<dbReference type="PDB" id="6GIQ">
    <property type="method" value="EM"/>
    <property type="resolution" value="3.23 A"/>
    <property type="chains" value="i=1-59"/>
</dbReference>
<dbReference type="PDB" id="6HU9">
    <property type="method" value="EM"/>
    <property type="resolution" value="3.35 A"/>
    <property type="chains" value="i/u=2-56"/>
</dbReference>
<dbReference type="PDB" id="6T0B">
    <property type="method" value="EM"/>
    <property type="resolution" value="2.80 A"/>
    <property type="chains" value="i/v=2-56"/>
</dbReference>
<dbReference type="PDB" id="6T15">
    <property type="method" value="EM"/>
    <property type="resolution" value="3.29 A"/>
    <property type="chains" value="i=2-56"/>
</dbReference>
<dbReference type="PDB" id="6YMX">
    <property type="method" value="EM"/>
    <property type="resolution" value="3.17 A"/>
    <property type="chains" value="i=3-55"/>
</dbReference>
<dbReference type="PDB" id="6YMY">
    <property type="method" value="EM"/>
    <property type="resolution" value="3.41 A"/>
    <property type="chains" value="i=2-53"/>
</dbReference>
<dbReference type="PDB" id="7Z10">
    <property type="method" value="EM"/>
    <property type="resolution" value="3.87 A"/>
    <property type="chains" value="i=2-56"/>
</dbReference>
<dbReference type="PDB" id="8DH6">
    <property type="method" value="EM"/>
    <property type="resolution" value="2.94 A"/>
    <property type="chains" value="i=2-56"/>
</dbReference>
<dbReference type="PDB" id="8E7S">
    <property type="method" value="EM"/>
    <property type="resolution" value="3.20 A"/>
    <property type="chains" value="R/r=1-59"/>
</dbReference>
<dbReference type="PDB" id="8EC0">
    <property type="method" value="EM"/>
    <property type="resolution" value="3.30 A"/>
    <property type="chains" value="R=1-59"/>
</dbReference>
<dbReference type="PDB" id="9ETZ">
    <property type="method" value="EM"/>
    <property type="resolution" value="2.40 A"/>
    <property type="chains" value="i=2-56"/>
</dbReference>
<dbReference type="PDBsum" id="6GIQ"/>
<dbReference type="PDBsum" id="6HU9"/>
<dbReference type="PDBsum" id="6T0B"/>
<dbReference type="PDBsum" id="6T15"/>
<dbReference type="PDBsum" id="6YMX"/>
<dbReference type="PDBsum" id="6YMY"/>
<dbReference type="PDBsum" id="7Z10"/>
<dbReference type="PDBsum" id="8DH6"/>
<dbReference type="PDBsum" id="8E7S"/>
<dbReference type="PDBsum" id="8EC0"/>
<dbReference type="PDBsum" id="9ETZ"/>
<dbReference type="EMDB" id="EMD-10847"/>
<dbReference type="EMDB" id="EMD-10848"/>
<dbReference type="EMDB" id="EMD-14436"/>
<dbReference type="EMDB" id="EMD-19963"/>
<dbReference type="EMDB" id="EMD-27430"/>
<dbReference type="EMDB" id="EMD-27940"/>
<dbReference type="EMDB" id="EMD-28011"/>
<dbReference type="SMR" id="P07255"/>
<dbReference type="BioGRID" id="31992">
    <property type="interactions" value="145"/>
</dbReference>
<dbReference type="ComplexPortal" id="CPX-1721">
    <property type="entry name" value="Mitochondrial respiratory chain complex IV, COX5A variant"/>
</dbReference>
<dbReference type="ComplexPortal" id="CPX-1722">
    <property type="entry name" value="Mitochondrial respiratory chain complex IV, COX5B variant"/>
</dbReference>
<dbReference type="DIP" id="DIP-5231N"/>
<dbReference type="FunCoup" id="P07255">
    <property type="interactions" value="147"/>
</dbReference>
<dbReference type="IntAct" id="P07255">
    <property type="interactions" value="9"/>
</dbReference>
<dbReference type="STRING" id="4932.YDL067C"/>
<dbReference type="TCDB" id="3.D.4.8.1">
    <property type="family name" value="the proton-translocating cytochrome oxidase (cox) superfamily"/>
</dbReference>
<dbReference type="PaxDb" id="4932-YDL067C"/>
<dbReference type="PeptideAtlas" id="P07255"/>
<dbReference type="TopDownProteomics" id="P07255"/>
<dbReference type="EnsemblFungi" id="YDL067C_mRNA">
    <property type="protein sequence ID" value="YDL067C"/>
    <property type="gene ID" value="YDL067C"/>
</dbReference>
<dbReference type="GeneID" id="851492"/>
<dbReference type="KEGG" id="sce:YDL067C"/>
<dbReference type="AGR" id="SGD:S000002225"/>
<dbReference type="SGD" id="S000002225">
    <property type="gene designation" value="COX9"/>
</dbReference>
<dbReference type="VEuPathDB" id="FungiDB:YDL067C"/>
<dbReference type="eggNOG" id="ENOG502SBM8">
    <property type="taxonomic scope" value="Eukaryota"/>
</dbReference>
<dbReference type="HOGENOM" id="CLU_196969_0_0_1"/>
<dbReference type="InParanoid" id="P07255"/>
<dbReference type="OMA" id="ASYWWWG"/>
<dbReference type="OrthoDB" id="2317211at2759"/>
<dbReference type="BioCyc" id="MetaCyc:YDL067C-MONOMER"/>
<dbReference type="BioCyc" id="YEAST:YDL067C-MONOMER"/>
<dbReference type="UniPathway" id="UPA00705"/>
<dbReference type="BioGRID-ORCS" id="851492">
    <property type="hits" value="6 hits in 10 CRISPR screens"/>
</dbReference>
<dbReference type="PRO" id="PR:P07255"/>
<dbReference type="Proteomes" id="UP000002311">
    <property type="component" value="Chromosome IV"/>
</dbReference>
<dbReference type="RNAct" id="P07255">
    <property type="molecule type" value="protein"/>
</dbReference>
<dbReference type="GO" id="GO:0005743">
    <property type="term" value="C:mitochondrial inner membrane"/>
    <property type="evidence" value="ECO:0007669"/>
    <property type="project" value="UniProtKB-SubCell"/>
</dbReference>
<dbReference type="GO" id="GO:0005739">
    <property type="term" value="C:mitochondrion"/>
    <property type="evidence" value="ECO:0007005"/>
    <property type="project" value="SGD"/>
</dbReference>
<dbReference type="GO" id="GO:0045277">
    <property type="term" value="C:respiratory chain complex IV"/>
    <property type="evidence" value="ECO:0000314"/>
    <property type="project" value="SGD"/>
</dbReference>
<dbReference type="GO" id="GO:0016491">
    <property type="term" value="F:oxidoreductase activity"/>
    <property type="evidence" value="ECO:0007669"/>
    <property type="project" value="UniProtKB-KW"/>
</dbReference>
<dbReference type="GO" id="GO:0006123">
    <property type="term" value="P:mitochondrial electron transport, cytochrome c to oxygen"/>
    <property type="evidence" value="ECO:0000314"/>
    <property type="project" value="SGD"/>
</dbReference>
<dbReference type="GO" id="GO:1902600">
    <property type="term" value="P:proton transmembrane transport"/>
    <property type="evidence" value="ECO:0007669"/>
    <property type="project" value="GOC"/>
</dbReference>
<dbReference type="CDD" id="cd22888">
    <property type="entry name" value="CcO_VIIa_fungal"/>
    <property type="match status" value="1"/>
</dbReference>
<dbReference type="InterPro" id="IPR014368">
    <property type="entry name" value="Cyt_c_oxidase_su7a_fun"/>
</dbReference>
<dbReference type="PANTHER" id="PTHR28264:SF1">
    <property type="entry name" value="CYTOCHROME C OXIDASE SUBUNIT 6C"/>
    <property type="match status" value="1"/>
</dbReference>
<dbReference type="PANTHER" id="PTHR28264">
    <property type="entry name" value="CYTOCHROME C OXIDASE SUBUNIT 7A"/>
    <property type="match status" value="1"/>
</dbReference>
<dbReference type="PIRSF" id="PIRSF000283">
    <property type="entry name" value="COX9"/>
    <property type="match status" value="1"/>
</dbReference>